<evidence type="ECO:0000255" key="1">
    <source>
        <dbReference type="HAMAP-Rule" id="MF_00358"/>
    </source>
</evidence>
<evidence type="ECO:0000305" key="2"/>
<feature type="chain" id="PRO_0000266749" description="Small ribosomal subunit protein bS21">
    <location>
        <begin position="1"/>
        <end position="70"/>
    </location>
</feature>
<organism>
    <name type="scientific">Albidiferax ferrireducens (strain ATCC BAA-621 / DSM 15236 / T118)</name>
    <name type="common">Rhodoferax ferrireducens</name>
    <dbReference type="NCBI Taxonomy" id="338969"/>
    <lineage>
        <taxon>Bacteria</taxon>
        <taxon>Pseudomonadati</taxon>
        <taxon>Pseudomonadota</taxon>
        <taxon>Betaproteobacteria</taxon>
        <taxon>Burkholderiales</taxon>
        <taxon>Comamonadaceae</taxon>
        <taxon>Rhodoferax</taxon>
    </lineage>
</organism>
<accession>Q21UF7</accession>
<gene>
    <name evidence="1" type="primary">rpsU</name>
    <name type="ordered locus">Rfer_2885</name>
</gene>
<protein>
    <recommendedName>
        <fullName evidence="1">Small ribosomal subunit protein bS21</fullName>
    </recommendedName>
    <alternativeName>
        <fullName evidence="2">30S ribosomal protein S21</fullName>
    </alternativeName>
</protein>
<comment type="similarity">
    <text evidence="1">Belongs to the bacterial ribosomal protein bS21 family.</text>
</comment>
<sequence length="70" mass="8499">MTTIRVKENEPFDVALRRFKRTIEKLGLLTDLRAREFYEKPTAERKRKKAAAVKRNYKRIRAMQLPKKMY</sequence>
<name>RS21_ALBFT</name>
<proteinExistence type="inferred from homology"/>
<reference key="1">
    <citation type="submission" date="2006-02" db="EMBL/GenBank/DDBJ databases">
        <title>Complete sequence of chromosome of Rhodoferax ferrireducens DSM 15236.</title>
        <authorList>
            <person name="Copeland A."/>
            <person name="Lucas S."/>
            <person name="Lapidus A."/>
            <person name="Barry K."/>
            <person name="Detter J.C."/>
            <person name="Glavina del Rio T."/>
            <person name="Hammon N."/>
            <person name="Israni S."/>
            <person name="Pitluck S."/>
            <person name="Brettin T."/>
            <person name="Bruce D."/>
            <person name="Han C."/>
            <person name="Tapia R."/>
            <person name="Gilna P."/>
            <person name="Kiss H."/>
            <person name="Schmutz J."/>
            <person name="Larimer F."/>
            <person name="Land M."/>
            <person name="Kyrpides N."/>
            <person name="Ivanova N."/>
            <person name="Richardson P."/>
        </authorList>
    </citation>
    <scope>NUCLEOTIDE SEQUENCE [LARGE SCALE GENOMIC DNA]</scope>
    <source>
        <strain>ATCC BAA-621 / DSM 15236 / T118</strain>
    </source>
</reference>
<keyword id="KW-1185">Reference proteome</keyword>
<keyword id="KW-0687">Ribonucleoprotein</keyword>
<keyword id="KW-0689">Ribosomal protein</keyword>
<dbReference type="EMBL" id="CP000267">
    <property type="protein sequence ID" value="ABD70596.1"/>
    <property type="molecule type" value="Genomic_DNA"/>
</dbReference>
<dbReference type="RefSeq" id="WP_011465162.1">
    <property type="nucleotide sequence ID" value="NC_007908.1"/>
</dbReference>
<dbReference type="SMR" id="Q21UF7"/>
<dbReference type="STRING" id="338969.Rfer_2885"/>
<dbReference type="KEGG" id="rfr:Rfer_2885"/>
<dbReference type="eggNOG" id="COG0828">
    <property type="taxonomic scope" value="Bacteria"/>
</dbReference>
<dbReference type="HOGENOM" id="CLU_159258_1_2_4"/>
<dbReference type="OrthoDB" id="9799244at2"/>
<dbReference type="Proteomes" id="UP000008332">
    <property type="component" value="Chromosome"/>
</dbReference>
<dbReference type="GO" id="GO:1990904">
    <property type="term" value="C:ribonucleoprotein complex"/>
    <property type="evidence" value="ECO:0007669"/>
    <property type="project" value="UniProtKB-KW"/>
</dbReference>
<dbReference type="GO" id="GO:0005840">
    <property type="term" value="C:ribosome"/>
    <property type="evidence" value="ECO:0007669"/>
    <property type="project" value="UniProtKB-KW"/>
</dbReference>
<dbReference type="GO" id="GO:0003735">
    <property type="term" value="F:structural constituent of ribosome"/>
    <property type="evidence" value="ECO:0007669"/>
    <property type="project" value="InterPro"/>
</dbReference>
<dbReference type="GO" id="GO:0006412">
    <property type="term" value="P:translation"/>
    <property type="evidence" value="ECO:0007669"/>
    <property type="project" value="UniProtKB-UniRule"/>
</dbReference>
<dbReference type="Gene3D" id="1.20.5.1150">
    <property type="entry name" value="Ribosomal protein S8"/>
    <property type="match status" value="1"/>
</dbReference>
<dbReference type="HAMAP" id="MF_00358">
    <property type="entry name" value="Ribosomal_bS21"/>
    <property type="match status" value="1"/>
</dbReference>
<dbReference type="InterPro" id="IPR001911">
    <property type="entry name" value="Ribosomal_bS21"/>
</dbReference>
<dbReference type="InterPro" id="IPR018278">
    <property type="entry name" value="Ribosomal_bS21_CS"/>
</dbReference>
<dbReference type="InterPro" id="IPR038380">
    <property type="entry name" value="Ribosomal_bS21_sf"/>
</dbReference>
<dbReference type="NCBIfam" id="TIGR00030">
    <property type="entry name" value="S21p"/>
    <property type="match status" value="1"/>
</dbReference>
<dbReference type="PANTHER" id="PTHR21109">
    <property type="entry name" value="MITOCHONDRIAL 28S RIBOSOMAL PROTEIN S21"/>
    <property type="match status" value="1"/>
</dbReference>
<dbReference type="PANTHER" id="PTHR21109:SF22">
    <property type="entry name" value="SMALL RIBOSOMAL SUBUNIT PROTEIN BS21"/>
    <property type="match status" value="1"/>
</dbReference>
<dbReference type="Pfam" id="PF01165">
    <property type="entry name" value="Ribosomal_S21"/>
    <property type="match status" value="1"/>
</dbReference>
<dbReference type="PRINTS" id="PR00976">
    <property type="entry name" value="RIBOSOMALS21"/>
</dbReference>
<dbReference type="PROSITE" id="PS01181">
    <property type="entry name" value="RIBOSOMAL_S21"/>
    <property type="match status" value="1"/>
</dbReference>